<accession>C9S8G0</accession>
<keyword id="KW-0256">Endoplasmic reticulum</keyword>
<keyword id="KW-0378">Hydrolase</keyword>
<keyword id="KW-0472">Membrane</keyword>
<keyword id="KW-0645">Protease</keyword>
<keyword id="KW-1185">Reference proteome</keyword>
<keyword id="KW-0735">Signal-anchor</keyword>
<keyword id="KW-0812">Transmembrane</keyword>
<keyword id="KW-1133">Transmembrane helix</keyword>
<organism>
    <name type="scientific">Verticillium alfalfae (strain VaMs.102 / ATCC MYA-4576 / FGSC 10136)</name>
    <name type="common">Verticillium wilt of alfalfa</name>
    <name type="synonym">Verticillium albo-atrum</name>
    <dbReference type="NCBI Taxonomy" id="526221"/>
    <lineage>
        <taxon>Eukaryota</taxon>
        <taxon>Fungi</taxon>
        <taxon>Dikarya</taxon>
        <taxon>Ascomycota</taxon>
        <taxon>Pezizomycotina</taxon>
        <taxon>Sordariomycetes</taxon>
        <taxon>Hypocreomycetidae</taxon>
        <taxon>Glomerellales</taxon>
        <taxon>Plectosphaerellaceae</taxon>
        <taxon>Verticillium</taxon>
    </lineage>
</organism>
<protein>
    <recommendedName>
        <fullName>Signal peptidase complex catalytic subunit SEC11</fullName>
        <ecNumber evidence="1">3.4.21.89</ecNumber>
    </recommendedName>
    <alternativeName>
        <fullName>Signal peptidase I</fullName>
    </alternativeName>
</protein>
<dbReference type="EC" id="3.4.21.89" evidence="1"/>
<dbReference type="EMBL" id="DS985214">
    <property type="protein sequence ID" value="EEY15350.1"/>
    <property type="molecule type" value="Genomic_DNA"/>
</dbReference>
<dbReference type="RefSeq" id="XP_003009776.1">
    <property type="nucleotide sequence ID" value="XM_003009730.1"/>
</dbReference>
<dbReference type="SMR" id="C9S8G0"/>
<dbReference type="STRING" id="526221.C9S8G0"/>
<dbReference type="MEROPS" id="S26.010"/>
<dbReference type="GeneID" id="9536471"/>
<dbReference type="KEGG" id="val:VDBG_01459"/>
<dbReference type="eggNOG" id="KOG3342">
    <property type="taxonomic scope" value="Eukaryota"/>
</dbReference>
<dbReference type="HOGENOM" id="CLU_089996_0_0_1"/>
<dbReference type="OMA" id="ILMNEYP"/>
<dbReference type="OrthoDB" id="10257561at2759"/>
<dbReference type="Proteomes" id="UP000008698">
    <property type="component" value="Unassembled WGS sequence"/>
</dbReference>
<dbReference type="GO" id="GO:0005787">
    <property type="term" value="C:signal peptidase complex"/>
    <property type="evidence" value="ECO:0007669"/>
    <property type="project" value="TreeGrafter"/>
</dbReference>
<dbReference type="GO" id="GO:0004252">
    <property type="term" value="F:serine-type endopeptidase activity"/>
    <property type="evidence" value="ECO:0007669"/>
    <property type="project" value="UniProtKB-EC"/>
</dbReference>
<dbReference type="GO" id="GO:0006465">
    <property type="term" value="P:signal peptide processing"/>
    <property type="evidence" value="ECO:0007669"/>
    <property type="project" value="InterPro"/>
</dbReference>
<dbReference type="CDD" id="cd06530">
    <property type="entry name" value="S26_SPase_I"/>
    <property type="match status" value="1"/>
</dbReference>
<dbReference type="Gene3D" id="2.10.109.10">
    <property type="entry name" value="Umud Fragment, subunit A"/>
    <property type="match status" value="1"/>
</dbReference>
<dbReference type="InterPro" id="IPR036286">
    <property type="entry name" value="LexA/Signal_pep-like_sf"/>
</dbReference>
<dbReference type="InterPro" id="IPR019756">
    <property type="entry name" value="Pept_S26A_signal_pept_1_Ser-AS"/>
</dbReference>
<dbReference type="InterPro" id="IPR019533">
    <property type="entry name" value="Peptidase_S26"/>
</dbReference>
<dbReference type="InterPro" id="IPR001733">
    <property type="entry name" value="Peptidase_S26B"/>
</dbReference>
<dbReference type="NCBIfam" id="TIGR02228">
    <property type="entry name" value="sigpep_I_arch"/>
    <property type="match status" value="1"/>
</dbReference>
<dbReference type="PANTHER" id="PTHR10806">
    <property type="entry name" value="SIGNAL PEPTIDASE COMPLEX CATALYTIC SUBUNIT SEC11"/>
    <property type="match status" value="1"/>
</dbReference>
<dbReference type="PANTHER" id="PTHR10806:SF6">
    <property type="entry name" value="SIGNAL PEPTIDASE COMPLEX CATALYTIC SUBUNIT SEC11"/>
    <property type="match status" value="1"/>
</dbReference>
<dbReference type="PRINTS" id="PR00728">
    <property type="entry name" value="SIGNALPTASE"/>
</dbReference>
<dbReference type="SUPFAM" id="SSF51306">
    <property type="entry name" value="LexA/Signal peptidase"/>
    <property type="match status" value="1"/>
</dbReference>
<dbReference type="PROSITE" id="PS00501">
    <property type="entry name" value="SPASE_I_1"/>
    <property type="match status" value="1"/>
</dbReference>
<sequence>MLSSLKNPRQAAAQLLNFGLILSTAFMMWKGLSVITDSPSPIVVVLSGSMEPAFQRGDLLFLWNRNLLRETDVGEVVVYNVKDKDIPIVHRIVRKFGAGASAKLLTKGDNNAADDTELYARGQDYLERQDIIGSVVAYIPFVGYVTILLSEHPWLKTVMLGIMGLVVVLQRE</sequence>
<comment type="function">
    <text evidence="1 2">Catalytic component of the signal peptidase complex (SPC) which catalyzes the cleavage of N-terminal signal sequences from nascent proteins as they are translocated into the lumen of the endoplasmic reticulum (By similarity). Specifically cleaves N-terminal signal peptides that contain a hydrophobic alpha-helix (h-region) shorter than 18-20 amino acids (By similarity).</text>
</comment>
<comment type="catalytic activity">
    <reaction evidence="1">
        <text>Cleavage of hydrophobic, N-terminal signal or leader sequences from secreted and periplasmic proteins.</text>
        <dbReference type="EC" id="3.4.21.89"/>
    </reaction>
</comment>
<comment type="subunit">
    <text evidence="1 2">Component of the signal peptidase complex (SPC) composed of a catalytic subunit SEC11 and three accessory subunits SPC1, SPC2 and SPC3 (By similarity). The complex induces a local thinning of the ER membrane which is used to measure the length of the signal peptide (SP) h-region of protein substrates. This ensures the selectivity of the complex towards h-regions shorter than 18-20 amino acids (By similarity). SPC associates with the translocon complex (By similarity).</text>
</comment>
<comment type="subcellular location">
    <subcellularLocation>
        <location evidence="1">Endoplasmic reticulum membrane</location>
        <topology evidence="1">Single-pass type II membrane protein</topology>
    </subcellularLocation>
</comment>
<comment type="domain">
    <text evidence="2">The C-terminal short (CTS) helix is essential for catalytic activity. It may be accommodated as a transmembrane helix in the thinned membrane environment of the complex, similarly to the signal peptide in the complex substrates.</text>
</comment>
<comment type="similarity">
    <text evidence="4">Belongs to the peptidase S26B family.</text>
</comment>
<reference key="1">
    <citation type="journal article" date="2011" name="PLoS Pathog.">
        <title>Comparative genomics yields insights into niche adaptation of plant vascular wilt pathogens.</title>
        <authorList>
            <person name="Klosterman S.J."/>
            <person name="Subbarao K.V."/>
            <person name="Kang S."/>
            <person name="Veronese P."/>
            <person name="Gold S.E."/>
            <person name="Thomma B.P.H.J."/>
            <person name="Chen Z."/>
            <person name="Henrissat B."/>
            <person name="Lee Y.-H."/>
            <person name="Park J."/>
            <person name="Garcia-Pedrajas M.D."/>
            <person name="Barbara D.J."/>
            <person name="Anchieta A."/>
            <person name="de Jonge R."/>
            <person name="Santhanam P."/>
            <person name="Maruthachalam K."/>
            <person name="Atallah Z."/>
            <person name="Amyotte S.G."/>
            <person name="Paz Z."/>
            <person name="Inderbitzin P."/>
            <person name="Hayes R.J."/>
            <person name="Heiman D.I."/>
            <person name="Young S."/>
            <person name="Zeng Q."/>
            <person name="Engels R."/>
            <person name="Galagan J."/>
            <person name="Cuomo C.A."/>
            <person name="Dobinson K.F."/>
            <person name="Ma L.-J."/>
        </authorList>
    </citation>
    <scope>NUCLEOTIDE SEQUENCE [LARGE SCALE GENOMIC DNA]</scope>
    <source>
        <strain>VaMs.102 / ATCC MYA-4576 / FGSC 10136</strain>
    </source>
</reference>
<name>SEC11_VERA1</name>
<gene>
    <name type="primary">SEC11</name>
    <name type="ORF">VDBG_01459</name>
</gene>
<proteinExistence type="inferred from homology"/>
<evidence type="ECO:0000250" key="1">
    <source>
        <dbReference type="UniProtKB" id="P15367"/>
    </source>
</evidence>
<evidence type="ECO:0000250" key="2">
    <source>
        <dbReference type="UniProtKB" id="P67812"/>
    </source>
</evidence>
<evidence type="ECO:0000255" key="3"/>
<evidence type="ECO:0000305" key="4"/>
<feature type="chain" id="PRO_0000412371" description="Signal peptidase complex catalytic subunit SEC11">
    <location>
        <begin position="1"/>
        <end position="172"/>
    </location>
</feature>
<feature type="topological domain" description="Cytoplasmic" evidence="4">
    <location>
        <begin position="1"/>
        <end position="14"/>
    </location>
</feature>
<feature type="transmembrane region" description="Helical; Signal-anchor for type II membrane protein" evidence="3">
    <location>
        <begin position="15"/>
        <end position="35"/>
    </location>
</feature>
<feature type="topological domain" description="Lumenal" evidence="4">
    <location>
        <begin position="36"/>
        <end position="172"/>
    </location>
</feature>
<feature type="region of interest" description="C-terminal short (CTS) helix" evidence="2">
    <location>
        <begin position="158"/>
        <end position="169"/>
    </location>
</feature>
<feature type="active site" description="Charge relay system" evidence="1">
    <location>
        <position position="49"/>
    </location>
</feature>
<feature type="active site" description="Charge relay system" evidence="1">
    <location>
        <position position="90"/>
    </location>
</feature>
<feature type="active site" description="Charge relay system" evidence="1">
    <location>
        <position position="115"/>
    </location>
</feature>